<accession>B5F1W0</accession>
<protein>
    <recommendedName>
        <fullName evidence="1">Methylglyoxal synthase</fullName>
        <shortName evidence="1">MGS</shortName>
        <ecNumber evidence="1">4.2.3.3</ecNumber>
    </recommendedName>
</protein>
<proteinExistence type="inferred from homology"/>
<organism>
    <name type="scientific">Salmonella agona (strain SL483)</name>
    <dbReference type="NCBI Taxonomy" id="454166"/>
    <lineage>
        <taxon>Bacteria</taxon>
        <taxon>Pseudomonadati</taxon>
        <taxon>Pseudomonadota</taxon>
        <taxon>Gammaproteobacteria</taxon>
        <taxon>Enterobacterales</taxon>
        <taxon>Enterobacteriaceae</taxon>
        <taxon>Salmonella</taxon>
    </lineage>
</organism>
<evidence type="ECO:0000255" key="1">
    <source>
        <dbReference type="HAMAP-Rule" id="MF_00549"/>
    </source>
</evidence>
<feature type="chain" id="PRO_1000129002" description="Methylglyoxal synthase">
    <location>
        <begin position="1"/>
        <end position="152"/>
    </location>
</feature>
<feature type="domain" description="MGS-like" evidence="1">
    <location>
        <begin position="6"/>
        <end position="152"/>
    </location>
</feature>
<feature type="active site" description="Proton donor/acceptor" evidence="1">
    <location>
        <position position="71"/>
    </location>
</feature>
<feature type="binding site" evidence="1">
    <location>
        <position position="19"/>
    </location>
    <ligand>
        <name>substrate</name>
    </ligand>
</feature>
<feature type="binding site" evidence="1">
    <location>
        <position position="23"/>
    </location>
    <ligand>
        <name>substrate</name>
    </ligand>
</feature>
<feature type="binding site" evidence="1">
    <location>
        <begin position="45"/>
        <end position="48"/>
    </location>
    <ligand>
        <name>substrate</name>
    </ligand>
</feature>
<feature type="binding site" evidence="1">
    <location>
        <begin position="65"/>
        <end position="66"/>
    </location>
    <ligand>
        <name>substrate</name>
    </ligand>
</feature>
<feature type="binding site" evidence="1">
    <location>
        <position position="98"/>
    </location>
    <ligand>
        <name>substrate</name>
    </ligand>
</feature>
<sequence length="152" mass="16991">MELTTRTLPTRKHIALVAHDHCKQMLMNWVERHQPLLEKHVLYATGTTGNLIQRATGMDVNAMLSGPMGGDQQVGALISEGKIDVLIFFWDPLNAVPHDPDVKALLRLATVWNIPVATNVSTADFIIQSPHFNDAVDILIPDYARYLAERLK</sequence>
<reference key="1">
    <citation type="journal article" date="2011" name="J. Bacteriol.">
        <title>Comparative genomics of 28 Salmonella enterica isolates: evidence for CRISPR-mediated adaptive sublineage evolution.</title>
        <authorList>
            <person name="Fricke W.F."/>
            <person name="Mammel M.K."/>
            <person name="McDermott P.F."/>
            <person name="Tartera C."/>
            <person name="White D.G."/>
            <person name="Leclerc J.E."/>
            <person name="Ravel J."/>
            <person name="Cebula T.A."/>
        </authorList>
    </citation>
    <scope>NUCLEOTIDE SEQUENCE [LARGE SCALE GENOMIC DNA]</scope>
    <source>
        <strain>SL483</strain>
    </source>
</reference>
<dbReference type="EC" id="4.2.3.3" evidence="1"/>
<dbReference type="EMBL" id="CP001138">
    <property type="protein sequence ID" value="ACH52124.1"/>
    <property type="molecule type" value="Genomic_DNA"/>
</dbReference>
<dbReference type="RefSeq" id="WP_000424187.1">
    <property type="nucleotide sequence ID" value="NC_011149.1"/>
</dbReference>
<dbReference type="SMR" id="B5F1W0"/>
<dbReference type="KEGG" id="sea:SeAg_B1034"/>
<dbReference type="HOGENOM" id="CLU_120420_0_1_6"/>
<dbReference type="Proteomes" id="UP000008819">
    <property type="component" value="Chromosome"/>
</dbReference>
<dbReference type="GO" id="GO:0005829">
    <property type="term" value="C:cytosol"/>
    <property type="evidence" value="ECO:0007669"/>
    <property type="project" value="TreeGrafter"/>
</dbReference>
<dbReference type="GO" id="GO:0008929">
    <property type="term" value="F:methylglyoxal synthase activity"/>
    <property type="evidence" value="ECO:0007669"/>
    <property type="project" value="UniProtKB-UniRule"/>
</dbReference>
<dbReference type="GO" id="GO:0019242">
    <property type="term" value="P:methylglyoxal biosynthetic process"/>
    <property type="evidence" value="ECO:0007669"/>
    <property type="project" value="UniProtKB-UniRule"/>
</dbReference>
<dbReference type="CDD" id="cd01422">
    <property type="entry name" value="MGS"/>
    <property type="match status" value="1"/>
</dbReference>
<dbReference type="FunFam" id="3.40.50.1380:FF:000002">
    <property type="entry name" value="Methylglyoxal synthase"/>
    <property type="match status" value="1"/>
</dbReference>
<dbReference type="Gene3D" id="3.40.50.1380">
    <property type="entry name" value="Methylglyoxal synthase-like domain"/>
    <property type="match status" value="1"/>
</dbReference>
<dbReference type="HAMAP" id="MF_00549">
    <property type="entry name" value="Methylglyoxal_synth"/>
    <property type="match status" value="1"/>
</dbReference>
<dbReference type="InterPro" id="IPR004363">
    <property type="entry name" value="Methylgl_synth"/>
</dbReference>
<dbReference type="InterPro" id="IPR018148">
    <property type="entry name" value="Methylglyoxal_synth_AS"/>
</dbReference>
<dbReference type="InterPro" id="IPR011607">
    <property type="entry name" value="MGS-like_dom"/>
</dbReference>
<dbReference type="InterPro" id="IPR036914">
    <property type="entry name" value="MGS-like_dom_sf"/>
</dbReference>
<dbReference type="NCBIfam" id="TIGR00160">
    <property type="entry name" value="MGSA"/>
    <property type="match status" value="1"/>
</dbReference>
<dbReference type="NCBIfam" id="NF003559">
    <property type="entry name" value="PRK05234.1"/>
    <property type="match status" value="1"/>
</dbReference>
<dbReference type="PANTHER" id="PTHR30492">
    <property type="entry name" value="METHYLGLYOXAL SYNTHASE"/>
    <property type="match status" value="1"/>
</dbReference>
<dbReference type="PANTHER" id="PTHR30492:SF0">
    <property type="entry name" value="METHYLGLYOXAL SYNTHASE"/>
    <property type="match status" value="1"/>
</dbReference>
<dbReference type="Pfam" id="PF02142">
    <property type="entry name" value="MGS"/>
    <property type="match status" value="1"/>
</dbReference>
<dbReference type="PIRSF" id="PIRSF006614">
    <property type="entry name" value="Methylglyox_syn"/>
    <property type="match status" value="1"/>
</dbReference>
<dbReference type="SMART" id="SM00851">
    <property type="entry name" value="MGS"/>
    <property type="match status" value="1"/>
</dbReference>
<dbReference type="SUPFAM" id="SSF52335">
    <property type="entry name" value="Methylglyoxal synthase-like"/>
    <property type="match status" value="1"/>
</dbReference>
<dbReference type="PROSITE" id="PS01335">
    <property type="entry name" value="METHYLGLYOXAL_SYNTH"/>
    <property type="match status" value="1"/>
</dbReference>
<dbReference type="PROSITE" id="PS51855">
    <property type="entry name" value="MGS"/>
    <property type="match status" value="1"/>
</dbReference>
<comment type="function">
    <text evidence="1">Catalyzes the formation of methylglyoxal from dihydroxyacetone phosphate.</text>
</comment>
<comment type="catalytic activity">
    <reaction evidence="1">
        <text>dihydroxyacetone phosphate = methylglyoxal + phosphate</text>
        <dbReference type="Rhea" id="RHEA:17937"/>
        <dbReference type="ChEBI" id="CHEBI:17158"/>
        <dbReference type="ChEBI" id="CHEBI:43474"/>
        <dbReference type="ChEBI" id="CHEBI:57642"/>
        <dbReference type="EC" id="4.2.3.3"/>
    </reaction>
</comment>
<comment type="similarity">
    <text evidence="1">Belongs to the methylglyoxal synthase family.</text>
</comment>
<name>MGSA_SALA4</name>
<keyword id="KW-0456">Lyase</keyword>
<gene>
    <name evidence="1" type="primary">mgsA</name>
    <name type="ordered locus">SeAg_B1034</name>
</gene>